<name>RIFK_CANGA</name>
<proteinExistence type="inferred from homology"/>
<organism>
    <name type="scientific">Candida glabrata (strain ATCC 2001 / BCRC 20586 / JCM 3761 / NBRC 0622 / NRRL Y-65 / CBS 138)</name>
    <name type="common">Yeast</name>
    <name type="synonym">Nakaseomyces glabratus</name>
    <dbReference type="NCBI Taxonomy" id="284593"/>
    <lineage>
        <taxon>Eukaryota</taxon>
        <taxon>Fungi</taxon>
        <taxon>Dikarya</taxon>
        <taxon>Ascomycota</taxon>
        <taxon>Saccharomycotina</taxon>
        <taxon>Saccharomycetes</taxon>
        <taxon>Saccharomycetales</taxon>
        <taxon>Saccharomycetaceae</taxon>
        <taxon>Nakaseomyces</taxon>
    </lineage>
</organism>
<reference key="1">
    <citation type="journal article" date="2004" name="Nature">
        <title>Genome evolution in yeasts.</title>
        <authorList>
            <person name="Dujon B."/>
            <person name="Sherman D."/>
            <person name="Fischer G."/>
            <person name="Durrens P."/>
            <person name="Casaregola S."/>
            <person name="Lafontaine I."/>
            <person name="de Montigny J."/>
            <person name="Marck C."/>
            <person name="Neuveglise C."/>
            <person name="Talla E."/>
            <person name="Goffard N."/>
            <person name="Frangeul L."/>
            <person name="Aigle M."/>
            <person name="Anthouard V."/>
            <person name="Babour A."/>
            <person name="Barbe V."/>
            <person name="Barnay S."/>
            <person name="Blanchin S."/>
            <person name="Beckerich J.-M."/>
            <person name="Beyne E."/>
            <person name="Bleykasten C."/>
            <person name="Boisrame A."/>
            <person name="Boyer J."/>
            <person name="Cattolico L."/>
            <person name="Confanioleri F."/>
            <person name="de Daruvar A."/>
            <person name="Despons L."/>
            <person name="Fabre E."/>
            <person name="Fairhead C."/>
            <person name="Ferry-Dumazet H."/>
            <person name="Groppi A."/>
            <person name="Hantraye F."/>
            <person name="Hennequin C."/>
            <person name="Jauniaux N."/>
            <person name="Joyet P."/>
            <person name="Kachouri R."/>
            <person name="Kerrest A."/>
            <person name="Koszul R."/>
            <person name="Lemaire M."/>
            <person name="Lesur I."/>
            <person name="Ma L."/>
            <person name="Muller H."/>
            <person name="Nicaud J.-M."/>
            <person name="Nikolski M."/>
            <person name="Oztas S."/>
            <person name="Ozier-Kalogeropoulos O."/>
            <person name="Pellenz S."/>
            <person name="Potier S."/>
            <person name="Richard G.-F."/>
            <person name="Straub M.-L."/>
            <person name="Suleau A."/>
            <person name="Swennen D."/>
            <person name="Tekaia F."/>
            <person name="Wesolowski-Louvel M."/>
            <person name="Westhof E."/>
            <person name="Wirth B."/>
            <person name="Zeniou-Meyer M."/>
            <person name="Zivanovic Y."/>
            <person name="Bolotin-Fukuhara M."/>
            <person name="Thierry A."/>
            <person name="Bouchier C."/>
            <person name="Caudron B."/>
            <person name="Scarpelli C."/>
            <person name="Gaillardin C."/>
            <person name="Weissenbach J."/>
            <person name="Wincker P."/>
            <person name="Souciet J.-L."/>
        </authorList>
    </citation>
    <scope>NUCLEOTIDE SEQUENCE [LARGE SCALE GENOMIC DNA]</scope>
    <source>
        <strain>ATCC 2001 / BCRC 20586 / JCM 3761 / NBRC 0622 / NRRL Y-65 / CBS 138</strain>
    </source>
</reference>
<gene>
    <name type="primary">FMN1</name>
    <name type="ordered locus">CAGL0K11022g</name>
</gene>
<feature type="chain" id="PRO_0000301838" description="Riboflavin kinase">
    <location>
        <begin position="1"/>
        <end position="189"/>
    </location>
</feature>
<feature type="active site" description="Nucleophile" evidence="1">
    <location>
        <position position="124"/>
    </location>
</feature>
<feature type="binding site" evidence="2">
    <location>
        <position position="42"/>
    </location>
    <ligand>
        <name>Mg(2+)</name>
        <dbReference type="ChEBI" id="CHEBI:18420"/>
    </ligand>
</feature>
<feature type="binding site" evidence="2">
    <location>
        <position position="44"/>
    </location>
    <ligand>
        <name>Mg(2+)</name>
        <dbReference type="ChEBI" id="CHEBI:18420"/>
    </ligand>
</feature>
<keyword id="KW-0067">ATP-binding</keyword>
<keyword id="KW-0285">Flavoprotein</keyword>
<keyword id="KW-0288">FMN</keyword>
<keyword id="KW-0418">Kinase</keyword>
<keyword id="KW-0460">Magnesium</keyword>
<keyword id="KW-0479">Metal-binding</keyword>
<keyword id="KW-0547">Nucleotide-binding</keyword>
<keyword id="KW-1185">Reference proteome</keyword>
<keyword id="KW-0808">Transferase</keyword>
<keyword id="KW-0862">Zinc</keyword>
<comment type="function">
    <text evidence="1">Catalyzes the phosphorylation of riboflavin (vitamin B2) to form flavin mononucleotide (FMN) coenzyme.</text>
</comment>
<comment type="catalytic activity">
    <reaction>
        <text>riboflavin + ATP = FMN + ADP + H(+)</text>
        <dbReference type="Rhea" id="RHEA:14357"/>
        <dbReference type="ChEBI" id="CHEBI:15378"/>
        <dbReference type="ChEBI" id="CHEBI:30616"/>
        <dbReference type="ChEBI" id="CHEBI:57986"/>
        <dbReference type="ChEBI" id="CHEBI:58210"/>
        <dbReference type="ChEBI" id="CHEBI:456216"/>
        <dbReference type="EC" id="2.7.1.26"/>
    </reaction>
</comment>
<comment type="cofactor">
    <cofactor evidence="1">
        <name>Zn(2+)</name>
        <dbReference type="ChEBI" id="CHEBI:29105"/>
    </cofactor>
    <cofactor evidence="1">
        <name>Mg(2+)</name>
        <dbReference type="ChEBI" id="CHEBI:18420"/>
    </cofactor>
    <text evidence="1">Zinc or magnesium.</text>
</comment>
<comment type="pathway">
    <text>Cofactor biosynthesis; FMN biosynthesis; FMN from riboflavin (ATP route): step 1/1.</text>
</comment>
<comment type="similarity">
    <text evidence="3">Belongs to the flavokinase family.</text>
</comment>
<comment type="sequence caution" evidence="3">
    <conflict type="erroneous initiation">
        <sequence resource="EMBL-CDS" id="CAG61658"/>
    </conflict>
</comment>
<evidence type="ECO:0000250" key="1"/>
<evidence type="ECO:0000250" key="2">
    <source>
        <dbReference type="UniProtKB" id="Q969G6"/>
    </source>
</evidence>
<evidence type="ECO:0000305" key="3"/>
<accession>Q6FM49</accession>
<dbReference type="EC" id="2.7.1.26"/>
<dbReference type="EMBL" id="CR380957">
    <property type="protein sequence ID" value="CAG61658.1"/>
    <property type="status" value="ALT_INIT"/>
    <property type="molecule type" value="Genomic_DNA"/>
</dbReference>
<dbReference type="RefSeq" id="XP_448695.1">
    <property type="nucleotide sequence ID" value="XM_448695.1"/>
</dbReference>
<dbReference type="SMR" id="Q6FM49"/>
<dbReference type="FunCoup" id="Q6FM49">
    <property type="interactions" value="391"/>
</dbReference>
<dbReference type="STRING" id="284593.Q6FM49"/>
<dbReference type="KEGG" id="cgr:2890083"/>
<dbReference type="eggNOG" id="KOG3110">
    <property type="taxonomic scope" value="Eukaryota"/>
</dbReference>
<dbReference type="HOGENOM" id="CLU_048437_3_2_1"/>
<dbReference type="InParanoid" id="Q6FM49"/>
<dbReference type="UniPathway" id="UPA00276">
    <property type="reaction ID" value="UER00406"/>
</dbReference>
<dbReference type="Proteomes" id="UP000002428">
    <property type="component" value="Chromosome K"/>
</dbReference>
<dbReference type="GO" id="GO:0005739">
    <property type="term" value="C:mitochondrion"/>
    <property type="evidence" value="ECO:0007669"/>
    <property type="project" value="TreeGrafter"/>
</dbReference>
<dbReference type="GO" id="GO:0005524">
    <property type="term" value="F:ATP binding"/>
    <property type="evidence" value="ECO:0007669"/>
    <property type="project" value="UniProtKB-KW"/>
</dbReference>
<dbReference type="GO" id="GO:0046872">
    <property type="term" value="F:metal ion binding"/>
    <property type="evidence" value="ECO:0007669"/>
    <property type="project" value="UniProtKB-KW"/>
</dbReference>
<dbReference type="GO" id="GO:0008531">
    <property type="term" value="F:riboflavin kinase activity"/>
    <property type="evidence" value="ECO:0007669"/>
    <property type="project" value="UniProtKB-EC"/>
</dbReference>
<dbReference type="GO" id="GO:0009398">
    <property type="term" value="P:FMN biosynthetic process"/>
    <property type="evidence" value="ECO:0007669"/>
    <property type="project" value="UniProtKB-UniPathway"/>
</dbReference>
<dbReference type="GO" id="GO:0009231">
    <property type="term" value="P:riboflavin biosynthetic process"/>
    <property type="evidence" value="ECO:0007669"/>
    <property type="project" value="InterPro"/>
</dbReference>
<dbReference type="Gene3D" id="2.40.30.30">
    <property type="entry name" value="Riboflavin kinase-like"/>
    <property type="match status" value="1"/>
</dbReference>
<dbReference type="InterPro" id="IPR023468">
    <property type="entry name" value="Riboflavin_kinase"/>
</dbReference>
<dbReference type="InterPro" id="IPR015865">
    <property type="entry name" value="Riboflavin_kinase_bac/euk"/>
</dbReference>
<dbReference type="InterPro" id="IPR023465">
    <property type="entry name" value="Riboflavin_kinase_dom_sf"/>
</dbReference>
<dbReference type="PANTHER" id="PTHR22749:SF6">
    <property type="entry name" value="RIBOFLAVIN KINASE"/>
    <property type="match status" value="1"/>
</dbReference>
<dbReference type="PANTHER" id="PTHR22749">
    <property type="entry name" value="RIBOFLAVIN KINASE/FMN ADENYLYLTRANSFERASE"/>
    <property type="match status" value="1"/>
</dbReference>
<dbReference type="Pfam" id="PF01687">
    <property type="entry name" value="Flavokinase"/>
    <property type="match status" value="1"/>
</dbReference>
<dbReference type="SMART" id="SM00904">
    <property type="entry name" value="Flavokinase"/>
    <property type="match status" value="1"/>
</dbReference>
<dbReference type="SUPFAM" id="SSF82114">
    <property type="entry name" value="Riboflavin kinase-like"/>
    <property type="match status" value="1"/>
</dbReference>
<sequence length="189" mass="21196">MTVRDVDVPIPEQPGAPYPIVTKCCDIVCGFGRGSSELGIPTANVPVDQLPEVVNKLELGVYFGYAKVTPVAHDLEQVEREDGRVVSYNYGSHLEEDNGDLEVLPVVLSVGKNPFYHNDFKTVEIHILHDFKSTFYGAKIKFNILGYVRPELDYTSKEALIEDIKTDIEISKQVLDTEPYRAHMAELLK</sequence>
<protein>
    <recommendedName>
        <fullName>Riboflavin kinase</fullName>
        <ecNumber>2.7.1.26</ecNumber>
    </recommendedName>
    <alternativeName>
        <fullName>Flavin mononucleotide kinase 1</fullName>
    </alternativeName>
</protein>